<protein>
    <recommendedName>
        <fullName>Auxin-responsive protein IAA33</fullName>
    </recommendedName>
    <alternativeName>
        <fullName>Indoleacetic acid-induced protein 33</fullName>
    </alternativeName>
</protein>
<dbReference type="EMBL" id="AB011482">
    <property type="protein sequence ID" value="BAB08779.1"/>
    <property type="molecule type" value="Genomic_DNA"/>
</dbReference>
<dbReference type="EMBL" id="CP002688">
    <property type="protein sequence ID" value="AED96901.1"/>
    <property type="molecule type" value="Genomic_DNA"/>
</dbReference>
<dbReference type="EMBL" id="AY669804">
    <property type="protein sequence ID" value="AAT67088.1"/>
    <property type="molecule type" value="mRNA"/>
</dbReference>
<dbReference type="RefSeq" id="NP_200552.1">
    <property type="nucleotide sequence ID" value="NM_125125.3"/>
</dbReference>
<dbReference type="SMR" id="Q9FKM7"/>
<dbReference type="BioGRID" id="21092">
    <property type="interactions" value="48"/>
</dbReference>
<dbReference type="FunCoup" id="Q9FKM7">
    <property type="interactions" value="34"/>
</dbReference>
<dbReference type="IntAct" id="Q9FKM7">
    <property type="interactions" value="48"/>
</dbReference>
<dbReference type="STRING" id="3702.Q9FKM7"/>
<dbReference type="PaxDb" id="3702-AT5G57420.1"/>
<dbReference type="EnsemblPlants" id="AT5G57420.1">
    <property type="protein sequence ID" value="AT5G57420.1"/>
    <property type="gene ID" value="AT5G57420"/>
</dbReference>
<dbReference type="GeneID" id="835848"/>
<dbReference type="Gramene" id="AT5G57420.1">
    <property type="protein sequence ID" value="AT5G57420.1"/>
    <property type="gene ID" value="AT5G57420"/>
</dbReference>
<dbReference type="KEGG" id="ath:AT5G57420"/>
<dbReference type="Araport" id="AT5G57420"/>
<dbReference type="TAIR" id="AT5G57420">
    <property type="gene designation" value="IAA33"/>
</dbReference>
<dbReference type="eggNOG" id="ENOG502S02T">
    <property type="taxonomic scope" value="Eukaryota"/>
</dbReference>
<dbReference type="HOGENOM" id="CLU_135891_0_1_1"/>
<dbReference type="InParanoid" id="Q9FKM7"/>
<dbReference type="OMA" id="DKHGSYQ"/>
<dbReference type="OrthoDB" id="783725at2759"/>
<dbReference type="PhylomeDB" id="Q9FKM7"/>
<dbReference type="PRO" id="PR:Q9FKM7"/>
<dbReference type="Proteomes" id="UP000006548">
    <property type="component" value="Chromosome 5"/>
</dbReference>
<dbReference type="ExpressionAtlas" id="Q9FKM7">
    <property type="expression patterns" value="baseline and differential"/>
</dbReference>
<dbReference type="GO" id="GO:0005634">
    <property type="term" value="C:nucleus"/>
    <property type="evidence" value="ECO:0007669"/>
    <property type="project" value="UniProtKB-SubCell"/>
</dbReference>
<dbReference type="GO" id="GO:0003700">
    <property type="term" value="F:DNA-binding transcription factor activity"/>
    <property type="evidence" value="ECO:0000250"/>
    <property type="project" value="TAIR"/>
</dbReference>
<dbReference type="GO" id="GO:0009734">
    <property type="term" value="P:auxin-activated signaling pathway"/>
    <property type="evidence" value="ECO:0007669"/>
    <property type="project" value="UniProtKB-KW"/>
</dbReference>
<dbReference type="GO" id="GO:0009733">
    <property type="term" value="P:response to auxin"/>
    <property type="evidence" value="ECO:0000304"/>
    <property type="project" value="TAIR"/>
</dbReference>
<dbReference type="FunFam" id="3.10.20.90:FF:000360">
    <property type="entry name" value="Auxin-responsive protein"/>
    <property type="match status" value="1"/>
</dbReference>
<dbReference type="Gene3D" id="3.10.20.90">
    <property type="entry name" value="Phosphatidylinositol 3-kinase Catalytic Subunit, Chain A, domain 1"/>
    <property type="match status" value="1"/>
</dbReference>
<dbReference type="InterPro" id="IPR033389">
    <property type="entry name" value="AUX/IAA_dom"/>
</dbReference>
<dbReference type="InterPro" id="IPR003311">
    <property type="entry name" value="AUX_IAA"/>
</dbReference>
<dbReference type="InterPro" id="IPR053793">
    <property type="entry name" value="PB1-like"/>
</dbReference>
<dbReference type="PANTHER" id="PTHR31734">
    <property type="entry name" value="AUXIN-RESPONSIVE PROTEIN IAA17"/>
    <property type="match status" value="1"/>
</dbReference>
<dbReference type="PANTHER" id="PTHR31734:SF7">
    <property type="entry name" value="AUXIN-RESPONSIVE PROTEIN IAA33"/>
    <property type="match status" value="1"/>
</dbReference>
<dbReference type="Pfam" id="PF02309">
    <property type="entry name" value="AUX_IAA"/>
    <property type="match status" value="1"/>
</dbReference>
<dbReference type="SUPFAM" id="SSF54277">
    <property type="entry name" value="CAD &amp; PB1 domains"/>
    <property type="match status" value="1"/>
</dbReference>
<dbReference type="PROSITE" id="PS51745">
    <property type="entry name" value="PB1"/>
    <property type="match status" value="1"/>
</dbReference>
<sequence>MNSFEPQSQDSLQRRFHQDNSTTQQPRDTTTPFIPKPASKNHNNSNSSSGAAGRSFQGFGLNVEDDLVSSVVPPVTVVLEGRSICQRISLDKHGSYQSLASALRQMFVDGADSTDDLDLSNAIPGHLIAYEDMENDLLLAGDLTWKDFVRVAKRIRILPVKGNTRQVKRNE</sequence>
<comment type="function">
    <text evidence="4">Aux/IAA proteins are short-lived transcriptional factors that function as repressors of early auxin response genes at low auxin concentrations. Repression is thought to result from the interaction with auxin response factors (ARFs), proteins that bind to the auxin-responsive promoter element (AuxRE). Formation of heterodimers with ARF proteins may alter their ability to modulate early auxin response genes expression.</text>
</comment>
<comment type="subunit">
    <text evidence="1">Homodimers and heterodimers.</text>
</comment>
<comment type="interaction">
    <interactant intactId="EBI-3946739">
        <id>Q9FKM7</id>
    </interactant>
    <interactant intactId="EBI-3947588">
        <id>Q93YR9</id>
        <label>ARF16</label>
    </interactant>
    <organismsDiffer>false</organismsDiffer>
    <experiments>7</experiments>
</comment>
<comment type="interaction">
    <interactant intactId="EBI-3946739">
        <id>Q9FKM7</id>
    </interactant>
    <interactant intactId="EBI-3946783">
        <id>Q9C5W9</id>
        <label>ARF18</label>
    </interactant>
    <organismsDiffer>false</organismsDiffer>
    <experiments>6</experiments>
</comment>
<comment type="interaction">
    <interactant intactId="EBI-3946739">
        <id>Q9FKM7</id>
    </interactant>
    <interactant intactId="EBI-529887">
        <id>Q8RYC8</id>
        <label>ARF19</label>
    </interactant>
    <organismsDiffer>false</organismsDiffer>
    <experiments>4</experiments>
</comment>
<comment type="interaction">
    <interactant intactId="EBI-3946739">
        <id>Q9FKM7</id>
    </interactant>
    <interactant intactId="EBI-1799262">
        <id>Q94JM3</id>
        <label>ARF2</label>
    </interactant>
    <organismsDiffer>false</organismsDiffer>
    <experiments>3</experiments>
</comment>
<comment type="interaction">
    <interactant intactId="EBI-3946739">
        <id>Q9FKM7</id>
    </interactant>
    <interactant intactId="EBI-25527665">
        <id>A0A2H1ZEC0</id>
        <label>ARF20</label>
    </interactant>
    <organismsDiffer>false</organismsDiffer>
    <experiments>3</experiments>
</comment>
<comment type="interaction">
    <interactant intactId="EBI-3946739">
        <id>Q9FKM7</id>
    </interactant>
    <interactant intactId="EBI-15203988">
        <id>Q9LS00</id>
        <label>HHO1</label>
    </interactant>
    <organismsDiffer>false</organismsDiffer>
    <experiments>3</experiments>
</comment>
<comment type="interaction">
    <interactant intactId="EBI-3946739">
        <id>Q9FKM7</id>
    </interactant>
    <interactant intactId="EBI-3946434">
        <id>Q38828</id>
        <label>IAA10</label>
    </interactant>
    <organismsDiffer>false</organismsDiffer>
    <experiments>6</experiments>
</comment>
<comment type="interaction">
    <interactant intactId="EBI-3946739">
        <id>Q9FKM7</id>
    </interactant>
    <interactant intactId="EBI-1554143">
        <id>Q38831</id>
        <label>IAA13</label>
    </interactant>
    <organismsDiffer>false</organismsDiffer>
    <experiments>6</experiments>
</comment>
<comment type="interaction">
    <interactant intactId="EBI-3946739">
        <id>Q9FKM7</id>
    </interactant>
    <interactant intactId="EBI-632231">
        <id>O24407</id>
        <label>IAA16</label>
    </interactant>
    <organismsDiffer>false</organismsDiffer>
    <experiments>3</experiments>
</comment>
<comment type="interaction">
    <interactant intactId="EBI-3946739">
        <id>Q9FKM7</id>
    </interactant>
    <interactant intactId="EBI-632243">
        <id>P93830</id>
        <label>IAA17</label>
    </interactant>
    <organismsDiffer>false</organismsDiffer>
    <experiments>5</experiments>
</comment>
<comment type="interaction">
    <interactant intactId="EBI-3946739">
        <id>Q9FKM7</id>
    </interactant>
    <interactant intactId="EBI-632257">
        <id>O24409</id>
        <label>IAA19</label>
    </interactant>
    <organismsDiffer>false</organismsDiffer>
    <experiments>3</experiments>
</comment>
<comment type="interaction">
    <interactant intactId="EBI-3946739">
        <id>Q9FKM7</id>
    </interactant>
    <interactant intactId="EBI-632272">
        <id>O24410</id>
        <label>IAA20</label>
    </interactant>
    <organismsDiffer>false</organismsDiffer>
    <experiments>6</experiments>
</comment>
<comment type="interaction">
    <interactant intactId="EBI-3946739">
        <id>Q9FKM7</id>
    </interactant>
    <interactant intactId="EBI-3947418">
        <id>Q8LAL2</id>
        <label>IAA26</label>
    </interactant>
    <organismsDiffer>false</organismsDiffer>
    <experiments>5</experiments>
</comment>
<comment type="interaction">
    <interactant intactId="EBI-3946739">
        <id>Q9FKM7</id>
    </interactant>
    <interactant intactId="EBI-3946677">
        <id>Q9ZSY8</id>
        <label>IAA27</label>
    </interactant>
    <organismsDiffer>false</organismsDiffer>
    <experiments>6</experiments>
</comment>
<comment type="interaction">
    <interactant intactId="EBI-3946739">
        <id>Q9FKM7</id>
    </interactant>
    <interactant intactId="EBI-3133404">
        <id>Q9XFM0</id>
        <label>IAA28</label>
    </interactant>
    <organismsDiffer>false</organismsDiffer>
    <experiments>7</experiments>
</comment>
<comment type="interaction">
    <interactant intactId="EBI-3946739">
        <id>Q9FKM7</id>
    </interactant>
    <interactant intactId="EBI-307174">
        <id>Q38822</id>
        <label>IAA3</label>
    </interactant>
    <organismsDiffer>false</organismsDiffer>
    <experiments>3</experiments>
</comment>
<comment type="interaction">
    <interactant intactId="EBI-3946739">
        <id>Q9FKM7</id>
    </interactant>
    <interactant intactId="EBI-3946408">
        <id>Q8H174</id>
        <label>IAA31</label>
    </interactant>
    <organismsDiffer>false</organismsDiffer>
    <experiments>6</experiments>
</comment>
<comment type="interaction">
    <interactant intactId="EBI-3946739">
        <id>Q9FKM7</id>
    </interactant>
    <interactant intactId="EBI-3946448">
        <id>Q8RYC6</id>
        <label>IAA32</label>
    </interactant>
    <organismsDiffer>false</organismsDiffer>
    <experiments>3</experiments>
</comment>
<comment type="interaction">
    <interactant intactId="EBI-3946739">
        <id>Q9FKM7</id>
    </interactant>
    <interactant intactId="EBI-3946459">
        <id>Q9C5X0</id>
        <label>IAA34</label>
    </interactant>
    <organismsDiffer>false</organismsDiffer>
    <experiments>9</experiments>
</comment>
<comment type="interaction">
    <interactant intactId="EBI-3946739">
        <id>Q9FKM7</id>
    </interactant>
    <interactant intactId="EBI-632187">
        <id>P33077</id>
        <label>IAA4</label>
    </interactant>
    <organismsDiffer>false</organismsDiffer>
    <experiments>3</experiments>
</comment>
<comment type="interaction">
    <interactant intactId="EBI-3946739">
        <id>Q9FKM7</id>
    </interactant>
    <interactant intactId="EBI-1554124">
        <id>Q38824</id>
        <label>IAA6</label>
    </interactant>
    <organismsDiffer>false</organismsDiffer>
    <experiments>5</experiments>
</comment>
<comment type="interaction">
    <interactant intactId="EBI-3946739">
        <id>Q9FKM7</id>
    </interactant>
    <interactant intactId="EBI-4426144">
        <id>Q9C9L2</id>
        <label>TCP15</label>
    </interactant>
    <organismsDiffer>false</organismsDiffer>
    <experiments>3</experiments>
</comment>
<comment type="interaction">
    <interactant intactId="EBI-3946739">
        <id>Q9FKM7</id>
    </interactant>
    <interactant intactId="EBI-25522447">
        <id>Q9MAH8</id>
        <label>TCP3</label>
    </interactant>
    <organismsDiffer>false</organismsDiffer>
    <experiments>3</experiments>
</comment>
<comment type="subcellular location">
    <subcellularLocation>
        <location evidence="1">Nucleus</location>
    </subcellularLocation>
</comment>
<comment type="induction">
    <text evidence="1">By auxin.</text>
</comment>
<comment type="domain">
    <text>The N-terminal half of the protein contains the conserved domain II which is required for the correct degradation of the protein through the SCF-mediated ubiquitin-proteasome pathway. Interactions between Aux/IAA proteins and auxin response factors (ARFs) occur through their C-terminal dimerization domains III and IV.</text>
</comment>
<comment type="miscellaneous">
    <text>Lacks the EAR-like motif (Domain I) which is one of the conserved features of the Aux/IAA family.</text>
</comment>
<comment type="similarity">
    <text evidence="5">Belongs to the Aux/IAA family.</text>
</comment>
<feature type="chain" id="PRO_0000112859" description="Auxin-responsive protein IAA33">
    <location>
        <begin position="1"/>
        <end position="171"/>
    </location>
</feature>
<feature type="domain" description="PB1" evidence="2">
    <location>
        <begin position="72"/>
        <end position="162"/>
    </location>
</feature>
<feature type="region of interest" description="Disordered" evidence="3">
    <location>
        <begin position="1"/>
        <end position="51"/>
    </location>
</feature>
<feature type="compositionally biased region" description="Polar residues" evidence="3">
    <location>
        <begin position="1"/>
        <end position="11"/>
    </location>
</feature>
<feature type="compositionally biased region" description="Polar residues" evidence="3">
    <location>
        <begin position="19"/>
        <end position="32"/>
    </location>
</feature>
<feature type="compositionally biased region" description="Low complexity" evidence="3">
    <location>
        <begin position="40"/>
        <end position="49"/>
    </location>
</feature>
<gene>
    <name type="primary">IAA33</name>
    <name type="ordered locus">At5g57420</name>
    <name type="ORF">MUA2.1</name>
</gene>
<keyword id="KW-0927">Auxin signaling pathway</keyword>
<keyword id="KW-0539">Nucleus</keyword>
<keyword id="KW-1185">Reference proteome</keyword>
<keyword id="KW-0678">Repressor</keyword>
<keyword id="KW-0804">Transcription</keyword>
<keyword id="KW-0805">Transcription regulation</keyword>
<proteinExistence type="evidence at protein level"/>
<evidence type="ECO:0000250" key="1"/>
<evidence type="ECO:0000255" key="2">
    <source>
        <dbReference type="PROSITE-ProRule" id="PRU01081"/>
    </source>
</evidence>
<evidence type="ECO:0000256" key="3">
    <source>
        <dbReference type="SAM" id="MobiDB-lite"/>
    </source>
</evidence>
<evidence type="ECO:0000269" key="4">
    <source>
    </source>
</evidence>
<evidence type="ECO:0000305" key="5"/>
<reference key="1">
    <citation type="journal article" date="1998" name="DNA Res.">
        <title>Structural analysis of Arabidopsis thaliana chromosome 5. V. Sequence features of the regions of 1,381,565 bp covered by twenty one physically assigned P1 and TAC clones.</title>
        <authorList>
            <person name="Kaneko T."/>
            <person name="Kotani H."/>
            <person name="Nakamura Y."/>
            <person name="Sato S."/>
            <person name="Asamizu E."/>
            <person name="Miyajima N."/>
            <person name="Tabata S."/>
        </authorList>
    </citation>
    <scope>NUCLEOTIDE SEQUENCE [LARGE SCALE GENOMIC DNA]</scope>
    <source>
        <strain>cv. Columbia</strain>
    </source>
</reference>
<reference key="2">
    <citation type="journal article" date="2017" name="Plant J.">
        <title>Araport11: a complete reannotation of the Arabidopsis thaliana reference genome.</title>
        <authorList>
            <person name="Cheng C.Y."/>
            <person name="Krishnakumar V."/>
            <person name="Chan A.P."/>
            <person name="Thibaud-Nissen F."/>
            <person name="Schobel S."/>
            <person name="Town C.D."/>
        </authorList>
    </citation>
    <scope>GENOME REANNOTATION</scope>
    <source>
        <strain>cv. Columbia</strain>
    </source>
</reference>
<reference key="3">
    <citation type="submission" date="2004-06" db="EMBL/GenBank/DDBJ databases">
        <title>Arabidopsis open reading frame (ORF) clones.</title>
        <authorList>
            <person name="Yamada K."/>
            <person name="Chang C.H."/>
            <person name="Onodera C.S."/>
            <person name="Yu G."/>
            <person name="Theologis A."/>
        </authorList>
    </citation>
    <scope>NUCLEOTIDE SEQUENCE [LARGE SCALE MRNA]</scope>
    <source>
        <strain>cv. Columbia</strain>
    </source>
</reference>
<reference key="4">
    <citation type="journal article" date="2002" name="Plant Mol. Biol.">
        <title>Genetics of Aux/IAA and ARF action in plant growth and development.</title>
        <authorList>
            <person name="Liscum E."/>
            <person name="Reed J.W."/>
        </authorList>
    </citation>
    <scope>GENE FAMILY</scope>
    <scope>NOMENCLATURE</scope>
    <scope>FUNCTION</scope>
</reference>
<accession>Q9FKM7</accession>
<accession>Q2VW96</accession>
<name>IAA33_ARATH</name>
<organism>
    <name type="scientific">Arabidopsis thaliana</name>
    <name type="common">Mouse-ear cress</name>
    <dbReference type="NCBI Taxonomy" id="3702"/>
    <lineage>
        <taxon>Eukaryota</taxon>
        <taxon>Viridiplantae</taxon>
        <taxon>Streptophyta</taxon>
        <taxon>Embryophyta</taxon>
        <taxon>Tracheophyta</taxon>
        <taxon>Spermatophyta</taxon>
        <taxon>Magnoliopsida</taxon>
        <taxon>eudicotyledons</taxon>
        <taxon>Gunneridae</taxon>
        <taxon>Pentapetalae</taxon>
        <taxon>rosids</taxon>
        <taxon>malvids</taxon>
        <taxon>Brassicales</taxon>
        <taxon>Brassicaceae</taxon>
        <taxon>Camelineae</taxon>
        <taxon>Arabidopsis</taxon>
    </lineage>
</organism>